<proteinExistence type="inferred from homology"/>
<feature type="chain" id="PRO_0000395915" description="Pup--protein ligase">
    <location>
        <begin position="1"/>
        <end position="452"/>
    </location>
</feature>
<feature type="active site" description="Proton acceptor" evidence="1">
    <location>
        <position position="57"/>
    </location>
</feature>
<feature type="binding site" evidence="1">
    <location>
        <position position="9"/>
    </location>
    <ligand>
        <name>Mg(2+)</name>
        <dbReference type="ChEBI" id="CHEBI:18420"/>
    </ligand>
</feature>
<feature type="binding site" evidence="1">
    <location>
        <position position="53"/>
    </location>
    <ligand>
        <name>ATP</name>
        <dbReference type="ChEBI" id="CHEBI:30616"/>
    </ligand>
</feature>
<feature type="binding site" evidence="1">
    <location>
        <position position="55"/>
    </location>
    <ligand>
        <name>Mg(2+)</name>
        <dbReference type="ChEBI" id="CHEBI:18420"/>
    </ligand>
</feature>
<feature type="binding site" evidence="1">
    <location>
        <position position="63"/>
    </location>
    <ligand>
        <name>Mg(2+)</name>
        <dbReference type="ChEBI" id="CHEBI:18420"/>
    </ligand>
</feature>
<feature type="binding site" evidence="1">
    <location>
        <position position="66"/>
    </location>
    <ligand>
        <name>ATP</name>
        <dbReference type="ChEBI" id="CHEBI:30616"/>
    </ligand>
</feature>
<feature type="binding site" evidence="1">
    <location>
        <position position="419"/>
    </location>
    <ligand>
        <name>ATP</name>
        <dbReference type="ChEBI" id="CHEBI:30616"/>
    </ligand>
</feature>
<name>PAFA_PARS2</name>
<organism>
    <name type="scientific">Parafrankia sp. (strain EAN1pec)</name>
    <dbReference type="NCBI Taxonomy" id="298653"/>
    <lineage>
        <taxon>Bacteria</taxon>
        <taxon>Bacillati</taxon>
        <taxon>Actinomycetota</taxon>
        <taxon>Actinomycetes</taxon>
        <taxon>Frankiales</taxon>
        <taxon>Frankiaceae</taxon>
        <taxon>Parafrankia</taxon>
    </lineage>
</organism>
<accession>A8LH49</accession>
<dbReference type="EC" id="6.3.1.19" evidence="1"/>
<dbReference type="EMBL" id="CP000820">
    <property type="protein sequence ID" value="ABW14239.1"/>
    <property type="molecule type" value="Genomic_DNA"/>
</dbReference>
<dbReference type="RefSeq" id="WP_018499881.1">
    <property type="nucleotide sequence ID" value="NC_009921.1"/>
</dbReference>
<dbReference type="SMR" id="A8LH49"/>
<dbReference type="STRING" id="298653.Franean1_4874"/>
<dbReference type="MEROPS" id="U72.001"/>
<dbReference type="KEGG" id="fre:Franean1_4874"/>
<dbReference type="eggNOG" id="COG0638">
    <property type="taxonomic scope" value="Bacteria"/>
</dbReference>
<dbReference type="HOGENOM" id="CLU_040524_0_1_11"/>
<dbReference type="UniPathway" id="UPA00997"/>
<dbReference type="UniPathway" id="UPA00998"/>
<dbReference type="GO" id="GO:0005524">
    <property type="term" value="F:ATP binding"/>
    <property type="evidence" value="ECO:0007669"/>
    <property type="project" value="UniProtKB-UniRule"/>
</dbReference>
<dbReference type="GO" id="GO:0016879">
    <property type="term" value="F:ligase activity, forming carbon-nitrogen bonds"/>
    <property type="evidence" value="ECO:0007669"/>
    <property type="project" value="InterPro"/>
</dbReference>
<dbReference type="GO" id="GO:0000287">
    <property type="term" value="F:magnesium ion binding"/>
    <property type="evidence" value="ECO:0007669"/>
    <property type="project" value="UniProtKB-UniRule"/>
</dbReference>
<dbReference type="GO" id="GO:0019787">
    <property type="term" value="F:ubiquitin-like protein transferase activity"/>
    <property type="evidence" value="ECO:0007669"/>
    <property type="project" value="UniProtKB-UniRule"/>
</dbReference>
<dbReference type="GO" id="GO:0019941">
    <property type="term" value="P:modification-dependent protein catabolic process"/>
    <property type="evidence" value="ECO:0007669"/>
    <property type="project" value="UniProtKB-UniRule"/>
</dbReference>
<dbReference type="GO" id="GO:0010498">
    <property type="term" value="P:proteasomal protein catabolic process"/>
    <property type="evidence" value="ECO:0007669"/>
    <property type="project" value="UniProtKB-UniRule"/>
</dbReference>
<dbReference type="GO" id="GO:0070490">
    <property type="term" value="P:protein pupylation"/>
    <property type="evidence" value="ECO:0007669"/>
    <property type="project" value="UniProtKB-UniRule"/>
</dbReference>
<dbReference type="HAMAP" id="MF_02111">
    <property type="entry name" value="Pup_ligase"/>
    <property type="match status" value="1"/>
</dbReference>
<dbReference type="InterPro" id="IPR022279">
    <property type="entry name" value="Pup_ligase"/>
</dbReference>
<dbReference type="InterPro" id="IPR004347">
    <property type="entry name" value="Pup_ligase/deamidase"/>
</dbReference>
<dbReference type="NCBIfam" id="TIGR03686">
    <property type="entry name" value="pupylate_PafA"/>
    <property type="match status" value="1"/>
</dbReference>
<dbReference type="PANTHER" id="PTHR42307">
    <property type="entry name" value="PUP DEAMIDASE/DEPUPYLASE"/>
    <property type="match status" value="1"/>
</dbReference>
<dbReference type="PANTHER" id="PTHR42307:SF3">
    <property type="entry name" value="PUP--PROTEIN LIGASE"/>
    <property type="match status" value="1"/>
</dbReference>
<dbReference type="Pfam" id="PF03136">
    <property type="entry name" value="Pup_ligase"/>
    <property type="match status" value="1"/>
</dbReference>
<dbReference type="PIRSF" id="PIRSF018077">
    <property type="entry name" value="UCP018077"/>
    <property type="match status" value="1"/>
</dbReference>
<evidence type="ECO:0000255" key="1">
    <source>
        <dbReference type="HAMAP-Rule" id="MF_02111"/>
    </source>
</evidence>
<sequence length="452" mass="51885">MDRRIFGLENEYGVTCVFRGQRRLSPDEVARYLFRRVVSWGRSSNVFLKNGARLYLDVGSHPEYATPECDSVPDLVTHDKAGERILEGLLVEAERRLREEGIAGDIHLFKNNTDSAGNSYGCHENYLVGRHGEFSRLADVLVPFLVSRQILCGAGKVLQTPRGAVYCISQRAEHIWESVSSATTRSRPIINTRDEPHADAERFRRLHVIVGDSNMSETTMLLKLGSTDLVLRMIEAGVVLRDMSLENPIRAIREVSHDMTCQRRIKLANGREVSALDIQREYYSKAVEFVERRGGDAVAKRVLDLWGRTLLAIETEDLELVAREIDWVTKFVLIDRFRLKHGLSLASPRVAELDLKYHDIHRDRGLYYRMERAGLVERVTRDLDIFEAKSVPPQTTRARLRGEFIKRAQEKRRDFTVDWVHLKLNDQAQRTVLCKDPFRSVDDRVDKLIASM</sequence>
<gene>
    <name evidence="1" type="primary">pafA</name>
    <name type="ordered locus">Franean1_4874</name>
</gene>
<protein>
    <recommendedName>
        <fullName evidence="1">Pup--protein ligase</fullName>
        <ecNumber evidence="1">6.3.1.19</ecNumber>
    </recommendedName>
    <alternativeName>
        <fullName evidence="1">Proteasome accessory factor A</fullName>
    </alternativeName>
    <alternativeName>
        <fullName evidence="1">Pup-conjugating enzyme</fullName>
    </alternativeName>
</protein>
<reference key="1">
    <citation type="journal article" date="2007" name="Genome Res.">
        <title>Genome characteristics of facultatively symbiotic Frankia sp. strains reflect host range and host plant biogeography.</title>
        <authorList>
            <person name="Normand P."/>
            <person name="Lapierre P."/>
            <person name="Tisa L.S."/>
            <person name="Gogarten J.P."/>
            <person name="Alloisio N."/>
            <person name="Bagnarol E."/>
            <person name="Bassi C.A."/>
            <person name="Berry A.M."/>
            <person name="Bickhart D.M."/>
            <person name="Choisne N."/>
            <person name="Couloux A."/>
            <person name="Cournoyer B."/>
            <person name="Cruveiller S."/>
            <person name="Daubin V."/>
            <person name="Demange N."/>
            <person name="Francino M.P."/>
            <person name="Goltsman E."/>
            <person name="Huang Y."/>
            <person name="Kopp O.R."/>
            <person name="Labarre L."/>
            <person name="Lapidus A."/>
            <person name="Lavire C."/>
            <person name="Marechal J."/>
            <person name="Martinez M."/>
            <person name="Mastronunzio J.E."/>
            <person name="Mullin B.C."/>
            <person name="Niemann J."/>
            <person name="Pujic P."/>
            <person name="Rawnsley T."/>
            <person name="Rouy Z."/>
            <person name="Schenowitz C."/>
            <person name="Sellstedt A."/>
            <person name="Tavares F."/>
            <person name="Tomkins J.P."/>
            <person name="Vallenet D."/>
            <person name="Valverde C."/>
            <person name="Wall L.G."/>
            <person name="Wang Y."/>
            <person name="Medigue C."/>
            <person name="Benson D.R."/>
        </authorList>
    </citation>
    <scope>NUCLEOTIDE SEQUENCE [LARGE SCALE GENOMIC DNA]</scope>
    <source>
        <strain>EAN1pec</strain>
    </source>
</reference>
<keyword id="KW-0067">ATP-binding</keyword>
<keyword id="KW-0436">Ligase</keyword>
<keyword id="KW-0460">Magnesium</keyword>
<keyword id="KW-0479">Metal-binding</keyword>
<keyword id="KW-0547">Nucleotide-binding</keyword>
<keyword id="KW-0833">Ubl conjugation pathway</keyword>
<comment type="function">
    <text evidence="1">Catalyzes the covalent attachment of the prokaryotic ubiquitin-like protein modifier Pup to the proteasomal substrate proteins, thereby targeting them for proteasomal degradation. This tagging system is termed pupylation. The ligation reaction involves the side-chain carboxylate of the C-terminal glutamate of Pup and the side-chain amino group of a substrate lysine.</text>
</comment>
<comment type="catalytic activity">
    <reaction evidence="1">
        <text>ATP + [prokaryotic ubiquitin-like protein]-L-glutamate + [protein]-L-lysine = ADP + phosphate + N(6)-([prokaryotic ubiquitin-like protein]-gamma-L-glutamyl)-[protein]-L-lysine.</text>
        <dbReference type="EC" id="6.3.1.19"/>
    </reaction>
</comment>
<comment type="pathway">
    <text evidence="1">Protein degradation; proteasomal Pup-dependent pathway.</text>
</comment>
<comment type="pathway">
    <text evidence="1">Protein modification; protein pupylation.</text>
</comment>
<comment type="miscellaneous">
    <text evidence="1">The reaction mechanism probably proceeds via the activation of Pup by phosphorylation of its C-terminal glutamate, which is then subject to nucleophilic attack by the substrate lysine, resulting in an isopeptide bond and the release of phosphate as a good leaving group.</text>
</comment>
<comment type="similarity">
    <text evidence="1">Belongs to the Pup ligase/Pup deamidase family. Pup-conjugating enzyme subfamily.</text>
</comment>